<protein>
    <recommendedName>
        <fullName evidence="1">1-(5-phosphoribosyl)-5-[(5-phosphoribosylamino)methylideneamino] imidazole-4-carboxamide isomerase</fullName>
        <ecNumber evidence="1">5.3.1.16</ecNumber>
    </recommendedName>
    <alternativeName>
        <fullName evidence="1">Phosphoribosylformimino-5-aminoimidazole carboxamide ribotide isomerase</fullName>
    </alternativeName>
</protein>
<dbReference type="EC" id="5.3.1.16" evidence="1"/>
<dbReference type="EMBL" id="CP000308">
    <property type="protein sequence ID" value="ABG12807.1"/>
    <property type="molecule type" value="Genomic_DNA"/>
</dbReference>
<dbReference type="RefSeq" id="WP_002211891.1">
    <property type="nucleotide sequence ID" value="NZ_CP009906.1"/>
</dbReference>
<dbReference type="SMR" id="Q1C9R5"/>
<dbReference type="GeneID" id="96665163"/>
<dbReference type="KEGG" id="ypa:YPA_0839"/>
<dbReference type="UniPathway" id="UPA00031">
    <property type="reaction ID" value="UER00009"/>
</dbReference>
<dbReference type="Proteomes" id="UP000001971">
    <property type="component" value="Chromosome"/>
</dbReference>
<dbReference type="GO" id="GO:0005737">
    <property type="term" value="C:cytoplasm"/>
    <property type="evidence" value="ECO:0007669"/>
    <property type="project" value="UniProtKB-SubCell"/>
</dbReference>
<dbReference type="GO" id="GO:0003949">
    <property type="term" value="F:1-(5-phosphoribosyl)-5-[(5-phosphoribosylamino)methylideneamino]imidazole-4-carboxamide isomerase activity"/>
    <property type="evidence" value="ECO:0007669"/>
    <property type="project" value="UniProtKB-UniRule"/>
</dbReference>
<dbReference type="GO" id="GO:0000105">
    <property type="term" value="P:L-histidine biosynthetic process"/>
    <property type="evidence" value="ECO:0007669"/>
    <property type="project" value="UniProtKB-UniRule"/>
</dbReference>
<dbReference type="GO" id="GO:0000162">
    <property type="term" value="P:L-tryptophan biosynthetic process"/>
    <property type="evidence" value="ECO:0007669"/>
    <property type="project" value="TreeGrafter"/>
</dbReference>
<dbReference type="CDD" id="cd04732">
    <property type="entry name" value="HisA"/>
    <property type="match status" value="1"/>
</dbReference>
<dbReference type="FunFam" id="3.20.20.70:FF:000009">
    <property type="entry name" value="1-(5-phosphoribosyl)-5-[(5-phosphoribosylamino)methylideneamino] imidazole-4-carboxamide isomerase"/>
    <property type="match status" value="1"/>
</dbReference>
<dbReference type="Gene3D" id="3.20.20.70">
    <property type="entry name" value="Aldolase class I"/>
    <property type="match status" value="1"/>
</dbReference>
<dbReference type="HAMAP" id="MF_01014">
    <property type="entry name" value="HisA"/>
    <property type="match status" value="1"/>
</dbReference>
<dbReference type="InterPro" id="IPR013785">
    <property type="entry name" value="Aldolase_TIM"/>
</dbReference>
<dbReference type="InterPro" id="IPR006062">
    <property type="entry name" value="His_biosynth"/>
</dbReference>
<dbReference type="InterPro" id="IPR006063">
    <property type="entry name" value="HisA_bact_arch"/>
</dbReference>
<dbReference type="InterPro" id="IPR044524">
    <property type="entry name" value="Isoase_HisA-like"/>
</dbReference>
<dbReference type="InterPro" id="IPR023016">
    <property type="entry name" value="Isoase_HisA-like_bact"/>
</dbReference>
<dbReference type="InterPro" id="IPR011060">
    <property type="entry name" value="RibuloseP-bd_barrel"/>
</dbReference>
<dbReference type="NCBIfam" id="TIGR00007">
    <property type="entry name" value="1-(5-phosphoribosyl)-5-[(5-phosphoribosylamino)methylideneamino]imidazole-4-carboxamide isomerase"/>
    <property type="match status" value="1"/>
</dbReference>
<dbReference type="PANTHER" id="PTHR43090">
    <property type="entry name" value="1-(5-PHOSPHORIBOSYL)-5-[(5-PHOSPHORIBOSYLAMINO)METHYLIDENEAMINO] IMIDAZOLE-4-CARBOXAMIDE ISOMERASE"/>
    <property type="match status" value="1"/>
</dbReference>
<dbReference type="PANTHER" id="PTHR43090:SF2">
    <property type="entry name" value="1-(5-PHOSPHORIBOSYL)-5-[(5-PHOSPHORIBOSYLAMINO)METHYLIDENEAMINO] IMIDAZOLE-4-CARBOXAMIDE ISOMERASE"/>
    <property type="match status" value="1"/>
</dbReference>
<dbReference type="Pfam" id="PF00977">
    <property type="entry name" value="His_biosynth"/>
    <property type="match status" value="1"/>
</dbReference>
<dbReference type="SUPFAM" id="SSF51366">
    <property type="entry name" value="Ribulose-phoshate binding barrel"/>
    <property type="match status" value="1"/>
</dbReference>
<keyword id="KW-0028">Amino-acid biosynthesis</keyword>
<keyword id="KW-0963">Cytoplasm</keyword>
<keyword id="KW-0368">Histidine biosynthesis</keyword>
<keyword id="KW-0413">Isomerase</keyword>
<organism>
    <name type="scientific">Yersinia pestis bv. Antiqua (strain Antiqua)</name>
    <dbReference type="NCBI Taxonomy" id="360102"/>
    <lineage>
        <taxon>Bacteria</taxon>
        <taxon>Pseudomonadati</taxon>
        <taxon>Pseudomonadota</taxon>
        <taxon>Gammaproteobacteria</taxon>
        <taxon>Enterobacterales</taxon>
        <taxon>Yersiniaceae</taxon>
        <taxon>Yersinia</taxon>
    </lineage>
</organism>
<name>HIS4_YERPA</name>
<comment type="catalytic activity">
    <reaction evidence="1">
        <text>1-(5-phospho-beta-D-ribosyl)-5-[(5-phospho-beta-D-ribosylamino)methylideneamino]imidazole-4-carboxamide = 5-[(5-phospho-1-deoxy-D-ribulos-1-ylimino)methylamino]-1-(5-phospho-beta-D-ribosyl)imidazole-4-carboxamide</text>
        <dbReference type="Rhea" id="RHEA:15469"/>
        <dbReference type="ChEBI" id="CHEBI:58435"/>
        <dbReference type="ChEBI" id="CHEBI:58525"/>
        <dbReference type="EC" id="5.3.1.16"/>
    </reaction>
</comment>
<comment type="pathway">
    <text evidence="1">Amino-acid biosynthesis; L-histidine biosynthesis; L-histidine from 5-phospho-alpha-D-ribose 1-diphosphate: step 4/9.</text>
</comment>
<comment type="subcellular location">
    <subcellularLocation>
        <location evidence="1">Cytoplasm</location>
    </subcellularLocation>
</comment>
<comment type="similarity">
    <text evidence="1">Belongs to the HisA/HisF family.</text>
</comment>
<gene>
    <name evidence="1" type="primary">hisA</name>
    <name type="ordered locus">YPA_0839</name>
</gene>
<proteinExistence type="inferred from homology"/>
<accession>Q1C9R5</accession>
<feature type="chain" id="PRO_0000290562" description="1-(5-phosphoribosyl)-5-[(5-phosphoribosylamino)methylideneamino] imidazole-4-carboxamide isomerase">
    <location>
        <begin position="1"/>
        <end position="245"/>
    </location>
</feature>
<feature type="active site" description="Proton acceptor" evidence="1">
    <location>
        <position position="7"/>
    </location>
</feature>
<feature type="active site" description="Proton donor" evidence="1">
    <location>
        <position position="129"/>
    </location>
</feature>
<reference key="1">
    <citation type="journal article" date="2006" name="J. Bacteriol.">
        <title>Complete genome sequence of Yersinia pestis strains Antiqua and Nepal516: evidence of gene reduction in an emerging pathogen.</title>
        <authorList>
            <person name="Chain P.S.G."/>
            <person name="Hu P."/>
            <person name="Malfatti S.A."/>
            <person name="Radnedge L."/>
            <person name="Larimer F."/>
            <person name="Vergez L.M."/>
            <person name="Worsham P."/>
            <person name="Chu M.C."/>
            <person name="Andersen G.L."/>
        </authorList>
    </citation>
    <scope>NUCLEOTIDE SEQUENCE [LARGE SCALE GENOMIC DNA]</scope>
    <source>
        <strain>Antiqua</strain>
    </source>
</reference>
<evidence type="ECO:0000255" key="1">
    <source>
        <dbReference type="HAMAP-Rule" id="MF_01014"/>
    </source>
</evidence>
<sequence length="245" mass="26647">MIIPALDLIEGKVVRLHQGDYGQQRDYGNHPLPRLQDYQQQGAQVLHLVDLTGAKDPAARQIPLLRELLAGVDVPVQVGGGIRNEQDVVALLEAGAARVVVGSTAVKQPEMVQQWFERYGAEAIVLALDVRINEAGCKHVAISGWQENSDATLEQIVEQYLPYGLKHVLCTDISRDGTLSGSNVELYQEVCQRYPQVAFQASGGIGCLDDIARLRGSGVQGVIVGRALLDGKFNVKEAIACWQNV</sequence>